<dbReference type="EMBL" id="AY048589">
    <property type="protein sequence ID" value="AAL05938.1"/>
    <property type="molecule type" value="mRNA"/>
</dbReference>
<dbReference type="RefSeq" id="NP_001028146.1">
    <property type="nucleotide sequence ID" value="NM_001032974.1"/>
</dbReference>
<dbReference type="SMR" id="Q95J88"/>
<dbReference type="FunCoup" id="Q95J88">
    <property type="interactions" value="94"/>
</dbReference>
<dbReference type="STRING" id="13616.ENSMODP00000005917"/>
<dbReference type="GlyCosmos" id="Q95J88">
    <property type="glycosylation" value="1 site, No reported glycans"/>
</dbReference>
<dbReference type="GeneID" id="503501"/>
<dbReference type="KEGG" id="mdo:503501"/>
<dbReference type="CTD" id="7252"/>
<dbReference type="eggNOG" id="ENOG502S2JW">
    <property type="taxonomic scope" value="Eukaryota"/>
</dbReference>
<dbReference type="InParanoid" id="Q95J88"/>
<dbReference type="OrthoDB" id="8866353at2759"/>
<dbReference type="Proteomes" id="UP000002280">
    <property type="component" value="Unplaced"/>
</dbReference>
<dbReference type="GO" id="GO:0005737">
    <property type="term" value="C:cytoplasm"/>
    <property type="evidence" value="ECO:0000318"/>
    <property type="project" value="GO_Central"/>
</dbReference>
<dbReference type="GO" id="GO:0005615">
    <property type="term" value="C:extracellular space"/>
    <property type="evidence" value="ECO:0000318"/>
    <property type="project" value="GO_Central"/>
</dbReference>
<dbReference type="GO" id="GO:0005179">
    <property type="term" value="F:hormone activity"/>
    <property type="evidence" value="ECO:0007669"/>
    <property type="project" value="UniProtKB-KW"/>
</dbReference>
<dbReference type="GO" id="GO:0007186">
    <property type="term" value="P:G protein-coupled receptor signaling pathway"/>
    <property type="evidence" value="ECO:0000318"/>
    <property type="project" value="GO_Central"/>
</dbReference>
<dbReference type="CDD" id="cd00069">
    <property type="entry name" value="GHB_like"/>
    <property type="match status" value="1"/>
</dbReference>
<dbReference type="FunFam" id="2.10.90.10:FF:000007">
    <property type="entry name" value="Luteinizing hormone beta subunit"/>
    <property type="match status" value="1"/>
</dbReference>
<dbReference type="Gene3D" id="2.10.90.10">
    <property type="entry name" value="Cystine-knot cytokines"/>
    <property type="match status" value="1"/>
</dbReference>
<dbReference type="InterPro" id="IPR029034">
    <property type="entry name" value="Cystine-knot_cytokine"/>
</dbReference>
<dbReference type="InterPro" id="IPR006208">
    <property type="entry name" value="Glyco_hormone_CN"/>
</dbReference>
<dbReference type="InterPro" id="IPR001545">
    <property type="entry name" value="Gonadotropin_bsu"/>
</dbReference>
<dbReference type="InterPro" id="IPR018245">
    <property type="entry name" value="Gonadotropin_bsu_CS"/>
</dbReference>
<dbReference type="PANTHER" id="PTHR11515">
    <property type="entry name" value="GLYCOPROTEIN HORMONE BETA CHAIN"/>
    <property type="match status" value="1"/>
</dbReference>
<dbReference type="PANTHER" id="PTHR11515:SF5">
    <property type="entry name" value="THYROTROPIN SUBUNIT BETA"/>
    <property type="match status" value="1"/>
</dbReference>
<dbReference type="Pfam" id="PF00007">
    <property type="entry name" value="Cys_knot"/>
    <property type="match status" value="1"/>
</dbReference>
<dbReference type="SMART" id="SM00068">
    <property type="entry name" value="GHB"/>
    <property type="match status" value="1"/>
</dbReference>
<dbReference type="SUPFAM" id="SSF57501">
    <property type="entry name" value="Cystine-knot cytokines"/>
    <property type="match status" value="1"/>
</dbReference>
<dbReference type="PROSITE" id="PS00261">
    <property type="entry name" value="GLYCO_HORMONE_BETA_1"/>
    <property type="match status" value="1"/>
</dbReference>
<dbReference type="PROSITE" id="PS00689">
    <property type="entry name" value="GLYCO_HORMONE_BETA_2"/>
    <property type="match status" value="1"/>
</dbReference>
<name>TSHB_MONDO</name>
<comment type="function">
    <text evidence="1">Indispensable for the control of thyroid structure and metabolism.</text>
</comment>
<comment type="subunit">
    <text evidence="1">Heterodimer of a common alpha chain and a unique beta chain which confers biological specificity to thyrotropin, lutropin, follitropin and gonadotropin.</text>
</comment>
<comment type="subcellular location">
    <subcellularLocation>
        <location>Secreted</location>
    </subcellularLocation>
</comment>
<comment type="similarity">
    <text evidence="3">Belongs to the glycoprotein hormones subunit beta family.</text>
</comment>
<protein>
    <recommendedName>
        <fullName>Thyrotropin subunit beta</fullName>
    </recommendedName>
    <alternativeName>
        <fullName>Thyroid-stimulating hormone subunit beta</fullName>
        <shortName>TSH-B</shortName>
        <shortName>TSH-beta</shortName>
    </alternativeName>
    <alternativeName>
        <fullName>Thyrotropin beta chain</fullName>
    </alternativeName>
</protein>
<feature type="signal peptide" evidence="1">
    <location>
        <begin position="1"/>
        <end position="20"/>
    </location>
</feature>
<feature type="chain" id="PRO_0000042869" description="Thyrotropin subunit beta">
    <location>
        <begin position="21"/>
        <end position="132"/>
    </location>
</feature>
<feature type="propeptide" id="PRO_0000042870" evidence="1">
    <location>
        <begin position="133"/>
        <end position="138"/>
    </location>
</feature>
<feature type="glycosylation site" description="N-linked (GlcNAc...) asparagine" evidence="2">
    <location>
        <position position="43"/>
    </location>
</feature>
<feature type="disulfide bond" evidence="1">
    <location>
        <begin position="22"/>
        <end position="72"/>
    </location>
</feature>
<feature type="disulfide bond" evidence="1">
    <location>
        <begin position="36"/>
        <end position="87"/>
    </location>
</feature>
<feature type="disulfide bond" evidence="1">
    <location>
        <begin position="39"/>
        <end position="125"/>
    </location>
</feature>
<feature type="disulfide bond" evidence="1">
    <location>
        <begin position="47"/>
        <end position="103"/>
    </location>
</feature>
<feature type="disulfide bond" evidence="1">
    <location>
        <begin position="51"/>
        <end position="105"/>
    </location>
</feature>
<feature type="disulfide bond" evidence="1">
    <location>
        <begin position="108"/>
        <end position="115"/>
    </location>
</feature>
<keyword id="KW-1015">Disulfide bond</keyword>
<keyword id="KW-0325">Glycoprotein</keyword>
<keyword id="KW-0372">Hormone</keyword>
<keyword id="KW-1185">Reference proteome</keyword>
<keyword id="KW-0964">Secreted</keyword>
<keyword id="KW-0732">Signal</keyword>
<sequence>MTATFLMSLLFGLAFGQTMSLCVPTGYTMHIERRECAYCLTINTTICAGYCMTRDSNGKLFLPKSALSQDVCTYRDVIYRTVVMPGCPPHVIPYISYPVAVSCRCGKCNTDYIDCIHESVTTNYCTKPQKPYLVGFPV</sequence>
<gene>
    <name type="primary">TSHB</name>
</gene>
<accession>Q95J88</accession>
<reference key="1">
    <citation type="submission" date="2001-07" db="EMBL/GenBank/DDBJ databases">
        <title>Cloning and characterization of the cDNA encoding pituitary thyroid stimulating hormone (TSH, thyrotropin) beta of the marsupial, Monodelphis domestica.</title>
        <authorList>
            <person name="Kacsoh B."/>
        </authorList>
    </citation>
    <scope>NUCLEOTIDE SEQUENCE [MRNA]</scope>
    <source>
        <tissue>Pituitary</tissue>
    </source>
</reference>
<organism>
    <name type="scientific">Monodelphis domestica</name>
    <name type="common">Gray short-tailed opossum</name>
    <dbReference type="NCBI Taxonomy" id="13616"/>
    <lineage>
        <taxon>Eukaryota</taxon>
        <taxon>Metazoa</taxon>
        <taxon>Chordata</taxon>
        <taxon>Craniata</taxon>
        <taxon>Vertebrata</taxon>
        <taxon>Euteleostomi</taxon>
        <taxon>Mammalia</taxon>
        <taxon>Metatheria</taxon>
        <taxon>Didelphimorphia</taxon>
        <taxon>Didelphidae</taxon>
        <taxon>Monodelphis</taxon>
    </lineage>
</organism>
<evidence type="ECO:0000250" key="1"/>
<evidence type="ECO:0000255" key="2"/>
<evidence type="ECO:0000305" key="3"/>
<proteinExistence type="evidence at transcript level"/>